<dbReference type="EMBL" id="AE017220">
    <property type="protein sequence ID" value="AAX65007.1"/>
    <property type="molecule type" value="Genomic_DNA"/>
</dbReference>
<dbReference type="RefSeq" id="WP_001539693.1">
    <property type="nucleotide sequence ID" value="NC_006905.1"/>
</dbReference>
<dbReference type="SMR" id="Q57QK4"/>
<dbReference type="KEGG" id="sec:SCH_1101"/>
<dbReference type="HOGENOM" id="CLU_001265_57_3_6"/>
<dbReference type="Proteomes" id="UP000000538">
    <property type="component" value="Chromosome"/>
</dbReference>
<dbReference type="GO" id="GO:0005886">
    <property type="term" value="C:plasma membrane"/>
    <property type="evidence" value="ECO:0007669"/>
    <property type="project" value="UniProtKB-SubCell"/>
</dbReference>
<dbReference type="GO" id="GO:0022857">
    <property type="term" value="F:transmembrane transporter activity"/>
    <property type="evidence" value="ECO:0007669"/>
    <property type="project" value="UniProtKB-UniRule"/>
</dbReference>
<dbReference type="CDD" id="cd17391">
    <property type="entry name" value="MFS_MdtG_MDR_like"/>
    <property type="match status" value="1"/>
</dbReference>
<dbReference type="FunFam" id="1.20.1250.20:FF:000020">
    <property type="entry name" value="Multidrug resistance protein MdtG"/>
    <property type="match status" value="1"/>
</dbReference>
<dbReference type="FunFam" id="1.20.1250.20:FF:000022">
    <property type="entry name" value="Multidrug resistance protein MdtG"/>
    <property type="match status" value="1"/>
</dbReference>
<dbReference type="Gene3D" id="1.20.1250.20">
    <property type="entry name" value="MFS general substrate transporter like domains"/>
    <property type="match status" value="2"/>
</dbReference>
<dbReference type="HAMAP" id="MF_01528">
    <property type="entry name" value="MFS_MdtG"/>
    <property type="match status" value="1"/>
</dbReference>
<dbReference type="InterPro" id="IPR011701">
    <property type="entry name" value="MFS"/>
</dbReference>
<dbReference type="InterPro" id="IPR020846">
    <property type="entry name" value="MFS_dom"/>
</dbReference>
<dbReference type="InterPro" id="IPR050497">
    <property type="entry name" value="MFS_MdtG_subfamily"/>
</dbReference>
<dbReference type="InterPro" id="IPR005828">
    <property type="entry name" value="MFS_sugar_transport-like"/>
</dbReference>
<dbReference type="InterPro" id="IPR036259">
    <property type="entry name" value="MFS_trans_sf"/>
</dbReference>
<dbReference type="InterPro" id="IPR023692">
    <property type="entry name" value="Mutidrug-R_MdtG"/>
</dbReference>
<dbReference type="InterPro" id="IPR001958">
    <property type="entry name" value="Tet-R_TetA/multi-R_MdtG-like"/>
</dbReference>
<dbReference type="NCBIfam" id="NF007372">
    <property type="entry name" value="PRK09874.1"/>
    <property type="match status" value="1"/>
</dbReference>
<dbReference type="PANTHER" id="PTHR43414">
    <property type="entry name" value="MULTIDRUG RESISTANCE PROTEIN MDTG"/>
    <property type="match status" value="1"/>
</dbReference>
<dbReference type="PANTHER" id="PTHR43414:SF6">
    <property type="entry name" value="MULTIDRUG RESISTANCE PROTEIN MDTG"/>
    <property type="match status" value="1"/>
</dbReference>
<dbReference type="Pfam" id="PF07690">
    <property type="entry name" value="MFS_1"/>
    <property type="match status" value="1"/>
</dbReference>
<dbReference type="Pfam" id="PF00083">
    <property type="entry name" value="Sugar_tr"/>
    <property type="match status" value="1"/>
</dbReference>
<dbReference type="PRINTS" id="PR01035">
    <property type="entry name" value="TCRTETA"/>
</dbReference>
<dbReference type="SUPFAM" id="SSF103473">
    <property type="entry name" value="MFS general substrate transporter"/>
    <property type="match status" value="1"/>
</dbReference>
<dbReference type="PROSITE" id="PS50850">
    <property type="entry name" value="MFS"/>
    <property type="match status" value="1"/>
</dbReference>
<organism>
    <name type="scientific">Salmonella choleraesuis (strain SC-B67)</name>
    <dbReference type="NCBI Taxonomy" id="321314"/>
    <lineage>
        <taxon>Bacteria</taxon>
        <taxon>Pseudomonadati</taxon>
        <taxon>Pseudomonadota</taxon>
        <taxon>Gammaproteobacteria</taxon>
        <taxon>Enterobacterales</taxon>
        <taxon>Enterobacteriaceae</taxon>
        <taxon>Salmonella</taxon>
    </lineage>
</organism>
<accession>Q57QK4</accession>
<name>MDTG_SALCH</name>
<evidence type="ECO:0000255" key="1">
    <source>
        <dbReference type="HAMAP-Rule" id="MF_01528"/>
    </source>
</evidence>
<sequence>MSPSDVPINWKRNLTVTWLGCFLTGAAFSLVMPFLPLYVEQLGVTGHSALNMWSGLVFSITFLFSAIASPFWGGLADRKGRKIMLLRSALGMAIVMLLMGMAQNIWQFLILRALLGLLGGFILNANALIATQVPRHKSGWALGTLSTGGVSGALLGPLAGGLLADHYGLRPVFFITASVLFICFLLTFFFIRENFLPVSKKEMLHVREVVASLKNPRLVLSLFVTTLIIQVATGSIAPILTLYVRELAGNVSNIAFISGMIASVPGVAALLSAPRLGKLGDRIGPEKILIVALIISVLLLIPMSFVQTPWQLALLRFLLGAADGALLPAVQTLLVYNSTNQIAGRIFSYNQSFRDIGNVTGPLMGAAISASYGFRAVFCVTAGVVLFNAIYSWNSLRRRRLAIE</sequence>
<feature type="chain" id="PRO_0000173337" description="Multidrug resistance protein MdtG">
    <location>
        <begin position="1"/>
        <end position="404"/>
    </location>
</feature>
<feature type="transmembrane region" description="Helical" evidence="1">
    <location>
        <begin position="19"/>
        <end position="39"/>
    </location>
</feature>
<feature type="transmembrane region" description="Helical" evidence="1">
    <location>
        <begin position="56"/>
        <end position="76"/>
    </location>
</feature>
<feature type="transmembrane region" description="Helical" evidence="1">
    <location>
        <begin position="90"/>
        <end position="110"/>
    </location>
</feature>
<feature type="transmembrane region" description="Helical" evidence="1">
    <location>
        <begin position="113"/>
        <end position="133"/>
    </location>
</feature>
<feature type="transmembrane region" description="Helical" evidence="1">
    <location>
        <begin position="144"/>
        <end position="164"/>
    </location>
</feature>
<feature type="transmembrane region" description="Helical" evidence="1">
    <location>
        <begin position="171"/>
        <end position="191"/>
    </location>
</feature>
<feature type="transmembrane region" description="Helical" evidence="1">
    <location>
        <begin position="222"/>
        <end position="242"/>
    </location>
</feature>
<feature type="transmembrane region" description="Helical" evidence="1">
    <location>
        <begin position="254"/>
        <end position="274"/>
    </location>
</feature>
<feature type="transmembrane region" description="Helical" evidence="1">
    <location>
        <begin position="288"/>
        <end position="308"/>
    </location>
</feature>
<feature type="transmembrane region" description="Helical" evidence="1">
    <location>
        <begin position="317"/>
        <end position="337"/>
    </location>
</feature>
<feature type="transmembrane region" description="Helical" evidence="1">
    <location>
        <begin position="376"/>
        <end position="396"/>
    </location>
</feature>
<comment type="subcellular location">
    <subcellularLocation>
        <location evidence="1">Cell inner membrane</location>
        <topology evidence="1">Multi-pass membrane protein</topology>
    </subcellularLocation>
</comment>
<comment type="similarity">
    <text evidence="1">Belongs to the major facilitator superfamily. DHA1 family. MdtG (TC 2.A.1.2.20) subfamily.</text>
</comment>
<keyword id="KW-0997">Cell inner membrane</keyword>
<keyword id="KW-1003">Cell membrane</keyword>
<keyword id="KW-0472">Membrane</keyword>
<keyword id="KW-0812">Transmembrane</keyword>
<keyword id="KW-1133">Transmembrane helix</keyword>
<keyword id="KW-0813">Transport</keyword>
<gene>
    <name evidence="1" type="primary">mdtG</name>
    <name type="ordered locus">SCH_1101</name>
</gene>
<reference key="1">
    <citation type="journal article" date="2005" name="Nucleic Acids Res.">
        <title>The genome sequence of Salmonella enterica serovar Choleraesuis, a highly invasive and resistant zoonotic pathogen.</title>
        <authorList>
            <person name="Chiu C.-H."/>
            <person name="Tang P."/>
            <person name="Chu C."/>
            <person name="Hu S."/>
            <person name="Bao Q."/>
            <person name="Yu J."/>
            <person name="Chou Y.-Y."/>
            <person name="Wang H.-S."/>
            <person name="Lee Y.-S."/>
        </authorList>
    </citation>
    <scope>NUCLEOTIDE SEQUENCE [LARGE SCALE GENOMIC DNA]</scope>
    <source>
        <strain>SC-B67</strain>
    </source>
</reference>
<proteinExistence type="inferred from homology"/>
<protein>
    <recommendedName>
        <fullName evidence="1">Multidrug resistance protein MdtG</fullName>
    </recommendedName>
</protein>